<sequence>MKLSDFDFNVPNALIAQYPSSERDNSDLLIAGTKHIKTKFYNIIDYLKEGDLLVFNNSKVIKAKLHLGKNITINLNKKLSDNCWGAFAKPARKLNIGDEFYFDTHKIIITEKLAMGEIKVKFILNNISMIKFLDKYGEMPLPFYIKRTSSVCCSNMALFCDHDNTLKITSISHNSNTVNFRSTDSMIDSTNDNDRYQTIYSQIEGSVAAPTAGLHFTKDILDKLKTKGINTAFVTLHVGAGTFLPVKTENIHKHKMHTEYCSITAETAEIINKTKQKGRDIIAVGTTTLRTLESSCNNGIVKAGNFETDIFITPGFNFQIVDMLLTNFHFPKSTLFILICAFAGFKEMHALYKYAIKEKMRFFSYGDATLLYRKV</sequence>
<name>QUEA_RICTY</name>
<accession>Q68XF6</accession>
<gene>
    <name evidence="1" type="primary">queA</name>
    <name type="ordered locus">RT0204</name>
</gene>
<keyword id="KW-0963">Cytoplasm</keyword>
<keyword id="KW-0671">Queuosine biosynthesis</keyword>
<keyword id="KW-0949">S-adenosyl-L-methionine</keyword>
<keyword id="KW-0808">Transferase</keyword>
<feature type="chain" id="PRO_0000231368" description="S-adenosylmethionine:tRNA ribosyltransferase-isomerase">
    <location>
        <begin position="1"/>
        <end position="375"/>
    </location>
</feature>
<organism>
    <name type="scientific">Rickettsia typhi (strain ATCC VR-144 / Wilmington)</name>
    <dbReference type="NCBI Taxonomy" id="257363"/>
    <lineage>
        <taxon>Bacteria</taxon>
        <taxon>Pseudomonadati</taxon>
        <taxon>Pseudomonadota</taxon>
        <taxon>Alphaproteobacteria</taxon>
        <taxon>Rickettsiales</taxon>
        <taxon>Rickettsiaceae</taxon>
        <taxon>Rickettsieae</taxon>
        <taxon>Rickettsia</taxon>
        <taxon>typhus group</taxon>
    </lineage>
</organism>
<proteinExistence type="inferred from homology"/>
<reference key="1">
    <citation type="journal article" date="2004" name="J. Bacteriol.">
        <title>Complete genome sequence of Rickettsia typhi and comparison with sequences of other Rickettsiae.</title>
        <authorList>
            <person name="McLeod M.P."/>
            <person name="Qin X."/>
            <person name="Karpathy S.E."/>
            <person name="Gioia J."/>
            <person name="Highlander S.K."/>
            <person name="Fox G.E."/>
            <person name="McNeill T.Z."/>
            <person name="Jiang H."/>
            <person name="Muzny D."/>
            <person name="Jacob L.S."/>
            <person name="Hawes A.C."/>
            <person name="Sodergren E."/>
            <person name="Gill R."/>
            <person name="Hume J."/>
            <person name="Morgan M."/>
            <person name="Fan G."/>
            <person name="Amin A.G."/>
            <person name="Gibbs R.A."/>
            <person name="Hong C."/>
            <person name="Yu X.-J."/>
            <person name="Walker D.H."/>
            <person name="Weinstock G.M."/>
        </authorList>
    </citation>
    <scope>NUCLEOTIDE SEQUENCE [LARGE SCALE GENOMIC DNA]</scope>
    <source>
        <strain>ATCC VR-144 / Wilmington</strain>
    </source>
</reference>
<comment type="function">
    <text evidence="1">Transfers and isomerizes the ribose moiety from AdoMet to the 7-aminomethyl group of 7-deazaguanine (preQ1-tRNA) to give epoxyqueuosine (oQ-tRNA).</text>
</comment>
<comment type="catalytic activity">
    <reaction evidence="1">
        <text>7-aminomethyl-7-carbaguanosine(34) in tRNA + S-adenosyl-L-methionine = epoxyqueuosine(34) in tRNA + adenine + L-methionine + 2 H(+)</text>
        <dbReference type="Rhea" id="RHEA:32155"/>
        <dbReference type="Rhea" id="RHEA-COMP:10342"/>
        <dbReference type="Rhea" id="RHEA-COMP:18582"/>
        <dbReference type="ChEBI" id="CHEBI:15378"/>
        <dbReference type="ChEBI" id="CHEBI:16708"/>
        <dbReference type="ChEBI" id="CHEBI:57844"/>
        <dbReference type="ChEBI" id="CHEBI:59789"/>
        <dbReference type="ChEBI" id="CHEBI:82833"/>
        <dbReference type="ChEBI" id="CHEBI:194443"/>
        <dbReference type="EC" id="2.4.99.17"/>
    </reaction>
</comment>
<comment type="pathway">
    <text evidence="1">tRNA modification; tRNA-queuosine biosynthesis.</text>
</comment>
<comment type="subunit">
    <text evidence="1">Monomer.</text>
</comment>
<comment type="subcellular location">
    <subcellularLocation>
        <location evidence="1">Cytoplasm</location>
    </subcellularLocation>
</comment>
<comment type="similarity">
    <text evidence="1">Belongs to the QueA family.</text>
</comment>
<dbReference type="EC" id="2.4.99.17" evidence="1"/>
<dbReference type="EMBL" id="AE017197">
    <property type="protein sequence ID" value="AAU03686.1"/>
    <property type="molecule type" value="Genomic_DNA"/>
</dbReference>
<dbReference type="RefSeq" id="WP_011190672.1">
    <property type="nucleotide sequence ID" value="NC_006142.1"/>
</dbReference>
<dbReference type="SMR" id="Q68XF6"/>
<dbReference type="KEGG" id="rty:RT0204"/>
<dbReference type="eggNOG" id="COG0809">
    <property type="taxonomic scope" value="Bacteria"/>
</dbReference>
<dbReference type="HOGENOM" id="CLU_039110_1_0_5"/>
<dbReference type="OrthoDB" id="9805933at2"/>
<dbReference type="UniPathway" id="UPA00392"/>
<dbReference type="Proteomes" id="UP000000604">
    <property type="component" value="Chromosome"/>
</dbReference>
<dbReference type="GO" id="GO:0005737">
    <property type="term" value="C:cytoplasm"/>
    <property type="evidence" value="ECO:0007669"/>
    <property type="project" value="UniProtKB-SubCell"/>
</dbReference>
<dbReference type="GO" id="GO:0051075">
    <property type="term" value="F:S-adenosylmethionine:tRNA ribosyltransferase-isomerase activity"/>
    <property type="evidence" value="ECO:0007669"/>
    <property type="project" value="UniProtKB-EC"/>
</dbReference>
<dbReference type="GO" id="GO:0008616">
    <property type="term" value="P:queuosine biosynthetic process"/>
    <property type="evidence" value="ECO:0007669"/>
    <property type="project" value="UniProtKB-UniRule"/>
</dbReference>
<dbReference type="GO" id="GO:0002099">
    <property type="term" value="P:tRNA wobble guanine modification"/>
    <property type="evidence" value="ECO:0007669"/>
    <property type="project" value="TreeGrafter"/>
</dbReference>
<dbReference type="FunFam" id="3.40.1780.10:FF:000001">
    <property type="entry name" value="S-adenosylmethionine:tRNA ribosyltransferase-isomerase"/>
    <property type="match status" value="1"/>
</dbReference>
<dbReference type="Gene3D" id="2.40.10.240">
    <property type="entry name" value="QueA-like"/>
    <property type="match status" value="1"/>
</dbReference>
<dbReference type="Gene3D" id="3.40.1780.10">
    <property type="entry name" value="QueA-like"/>
    <property type="match status" value="1"/>
</dbReference>
<dbReference type="HAMAP" id="MF_00113">
    <property type="entry name" value="QueA"/>
    <property type="match status" value="1"/>
</dbReference>
<dbReference type="InterPro" id="IPR003699">
    <property type="entry name" value="QueA"/>
</dbReference>
<dbReference type="InterPro" id="IPR042118">
    <property type="entry name" value="QueA_dom1"/>
</dbReference>
<dbReference type="InterPro" id="IPR042119">
    <property type="entry name" value="QueA_dom2"/>
</dbReference>
<dbReference type="InterPro" id="IPR036100">
    <property type="entry name" value="QueA_sf"/>
</dbReference>
<dbReference type="NCBIfam" id="NF002398">
    <property type="entry name" value="PRK01424.1"/>
    <property type="match status" value="1"/>
</dbReference>
<dbReference type="PANTHER" id="PTHR30307">
    <property type="entry name" value="S-ADENOSYLMETHIONINE:TRNA RIBOSYLTRANSFERASE-ISOMERASE"/>
    <property type="match status" value="1"/>
</dbReference>
<dbReference type="PANTHER" id="PTHR30307:SF0">
    <property type="entry name" value="S-ADENOSYLMETHIONINE:TRNA RIBOSYLTRANSFERASE-ISOMERASE"/>
    <property type="match status" value="1"/>
</dbReference>
<dbReference type="Pfam" id="PF02547">
    <property type="entry name" value="Queuosine_synth"/>
    <property type="match status" value="1"/>
</dbReference>
<dbReference type="SUPFAM" id="SSF111337">
    <property type="entry name" value="QueA-like"/>
    <property type="match status" value="1"/>
</dbReference>
<evidence type="ECO:0000255" key="1">
    <source>
        <dbReference type="HAMAP-Rule" id="MF_00113"/>
    </source>
</evidence>
<protein>
    <recommendedName>
        <fullName evidence="1">S-adenosylmethionine:tRNA ribosyltransferase-isomerase</fullName>
        <ecNumber evidence="1">2.4.99.17</ecNumber>
    </recommendedName>
    <alternativeName>
        <fullName evidence="1">Queuosine biosynthesis protein QueA</fullName>
    </alternativeName>
</protein>